<name>SYL_NEIG2</name>
<evidence type="ECO:0000255" key="1">
    <source>
        <dbReference type="HAMAP-Rule" id="MF_00049"/>
    </source>
</evidence>
<evidence type="ECO:0007829" key="2">
    <source>
        <dbReference type="PDB" id="6Q8A"/>
    </source>
</evidence>
<evidence type="ECO:0007829" key="3">
    <source>
        <dbReference type="PDB" id="7NTY"/>
    </source>
</evidence>
<evidence type="ECO:0007829" key="4">
    <source>
        <dbReference type="PDB" id="7NTZ"/>
    </source>
</evidence>
<evidence type="ECO:0007829" key="5">
    <source>
        <dbReference type="PDB" id="7NU0"/>
    </source>
</evidence>
<evidence type="ECO:0007829" key="6">
    <source>
        <dbReference type="PDB" id="7NU2"/>
    </source>
</evidence>
<evidence type="ECO:0007829" key="7">
    <source>
        <dbReference type="PDB" id="7NU7"/>
    </source>
</evidence>
<evidence type="ECO:0007829" key="8">
    <source>
        <dbReference type="PDB" id="7NUB"/>
    </source>
</evidence>
<evidence type="ECO:0007829" key="9">
    <source>
        <dbReference type="PDB" id="7NUC"/>
    </source>
</evidence>
<protein>
    <recommendedName>
        <fullName evidence="1">Leucine--tRNA ligase</fullName>
        <ecNumber evidence="1">6.1.1.4</ecNumber>
    </recommendedName>
    <alternativeName>
        <fullName evidence="1">Leucyl-tRNA synthetase</fullName>
        <shortName evidence="1">LeuRS</shortName>
    </alternativeName>
</protein>
<sequence length="876" mass="98035">MQEHYQPAAIEPAAQKKWDDARISNVSEDASKPKYYCLSMFPYPSGKLHMGHVRNYTIGDVLSRFKLLNGFNVMQPMGWDAFGMPAENAAMKNNVAPAAWTYDNIEYMKTQLKSLGFAVDWEREVATCKPEYYRWEQWLFTKLFEKGIVYRKNGTVNWDPVDQTVLANEQVIDGRGWRSGALIEKREIPMYYFKITDYAEELLNDLDKLEHWPEQVKTMQRNWIGKSRGMTVRFAVSDDSKQGLEGDYAKFLQVYTTRPDTLMGATYVAVAAEHPLATAAAADKPELQAFIAECKAGSVAEADMATMEKKGVPTGRYVVNPLNGDKLEVWIANYVLWGYGDGAVMAVPAHDERDFEFAAKYNLPKKQVIAVGDNAFDANRWQEWYGDKENGVLVNSGDLDGLDFQTAFDAVAAKLQSQGAGEPKTQYRLRDWGISRQRYWGCPIPIVHCEKCGDVPVPADQLPVVLPENVVPDGMGSPLAKMPEFYETSCPCCGGAAKRETDTMDTFMESSWYFFRYMSPKFSDGMVSAESAKYWGAVDQYIGGIEHAILHLLYARFFTKLMRDEGLVNVDEPFERLLTQGMVVCETYYRENDKGGKDWINPADVELTFDDKGRPVSAVLKADGLPVVISGTEKMSKSKNNGVDPQELINAYGADTARLFMMFAAPPEQSLEWSDSGVEGAHRFLRRLWRTVYEYLKQGGAVKAFAGNQDGLSKELKDLRHKLHSTTAKVSDDYGRRQQFNTAIAAVMELLNQYDKTDTGSEQGRAVAQEVLEAAVRLLWPIVPHICETLWSELNGAKLWEAGWPTVDEAALVKSEIEVMVQVNGKLRGKITVAADASKADLEAAALANEGAVKFMEGKPAKKIIVVPGRLVNIVV</sequence>
<comment type="catalytic activity">
    <reaction evidence="1">
        <text>tRNA(Leu) + L-leucine + ATP = L-leucyl-tRNA(Leu) + AMP + diphosphate</text>
        <dbReference type="Rhea" id="RHEA:11688"/>
        <dbReference type="Rhea" id="RHEA-COMP:9613"/>
        <dbReference type="Rhea" id="RHEA-COMP:9622"/>
        <dbReference type="ChEBI" id="CHEBI:30616"/>
        <dbReference type="ChEBI" id="CHEBI:33019"/>
        <dbReference type="ChEBI" id="CHEBI:57427"/>
        <dbReference type="ChEBI" id="CHEBI:78442"/>
        <dbReference type="ChEBI" id="CHEBI:78494"/>
        <dbReference type="ChEBI" id="CHEBI:456215"/>
        <dbReference type="EC" id="6.1.1.4"/>
    </reaction>
</comment>
<comment type="subcellular location">
    <subcellularLocation>
        <location evidence="1">Cytoplasm</location>
    </subcellularLocation>
</comment>
<comment type="similarity">
    <text evidence="1">Belongs to the class-I aminoacyl-tRNA synthetase family.</text>
</comment>
<dbReference type="EC" id="6.1.1.4" evidence="1"/>
<dbReference type="EMBL" id="CP001050">
    <property type="protein sequence ID" value="ACF28712.1"/>
    <property type="molecule type" value="Genomic_DNA"/>
</dbReference>
<dbReference type="RefSeq" id="WP_012503319.1">
    <property type="nucleotide sequence ID" value="NC_011035.1"/>
</dbReference>
<dbReference type="PDB" id="6Q8A">
    <property type="method" value="X-ray"/>
    <property type="resolution" value="2.11 A"/>
    <property type="chains" value="A=1-876"/>
</dbReference>
<dbReference type="PDB" id="7NTY">
    <property type="method" value="X-ray"/>
    <property type="resolution" value="2.39 A"/>
    <property type="chains" value="A=1-876"/>
</dbReference>
<dbReference type="PDB" id="7NTZ">
    <property type="method" value="X-ray"/>
    <property type="resolution" value="2.10 A"/>
    <property type="chains" value="A=1-876"/>
</dbReference>
<dbReference type="PDB" id="7NU0">
    <property type="method" value="X-ray"/>
    <property type="resolution" value="1.89 A"/>
    <property type="chains" value="A=1-876"/>
</dbReference>
<dbReference type="PDB" id="7NU1">
    <property type="method" value="X-ray"/>
    <property type="resolution" value="2.51 A"/>
    <property type="chains" value="A=1-876"/>
</dbReference>
<dbReference type="PDB" id="7NU2">
    <property type="method" value="X-ray"/>
    <property type="resolution" value="2.10 A"/>
    <property type="chains" value="A=1-876"/>
</dbReference>
<dbReference type="PDB" id="7NU3">
    <property type="method" value="X-ray"/>
    <property type="resolution" value="2.27 A"/>
    <property type="chains" value="A=1-876"/>
</dbReference>
<dbReference type="PDB" id="7NU4">
    <property type="method" value="X-ray"/>
    <property type="resolution" value="2.18 A"/>
    <property type="chains" value="A=1-876"/>
</dbReference>
<dbReference type="PDB" id="7NU5">
    <property type="method" value="X-ray"/>
    <property type="resolution" value="2.58 A"/>
    <property type="chains" value="A=1-876"/>
</dbReference>
<dbReference type="PDB" id="7NU6">
    <property type="method" value="X-ray"/>
    <property type="resolution" value="2.20 A"/>
    <property type="chains" value="A=1-876"/>
</dbReference>
<dbReference type="PDB" id="7NU7">
    <property type="method" value="X-ray"/>
    <property type="resolution" value="2.31 A"/>
    <property type="chains" value="A=1-876"/>
</dbReference>
<dbReference type="PDB" id="7NU8">
    <property type="method" value="X-ray"/>
    <property type="resolution" value="2.11 A"/>
    <property type="chains" value="A=1-876"/>
</dbReference>
<dbReference type="PDB" id="7NU9">
    <property type="method" value="X-ray"/>
    <property type="resolution" value="2.17 A"/>
    <property type="chains" value="A=1-876"/>
</dbReference>
<dbReference type="PDB" id="7NUA">
    <property type="method" value="X-ray"/>
    <property type="resolution" value="3.09 A"/>
    <property type="chains" value="A=1-876"/>
</dbReference>
<dbReference type="PDB" id="7NUB">
    <property type="method" value="X-ray"/>
    <property type="resolution" value="3.02 A"/>
    <property type="chains" value="A=1-876"/>
</dbReference>
<dbReference type="PDB" id="7NUC">
    <property type="method" value="X-ray"/>
    <property type="resolution" value="2.77 A"/>
    <property type="chains" value="A=1-876"/>
</dbReference>
<dbReference type="PDB" id="7YP8">
    <property type="method" value="X-ray"/>
    <property type="resolution" value="2.10 A"/>
    <property type="chains" value="A=1-876"/>
</dbReference>
<dbReference type="PDBsum" id="6Q8A"/>
<dbReference type="PDBsum" id="7NTY"/>
<dbReference type="PDBsum" id="7NTZ"/>
<dbReference type="PDBsum" id="7NU0"/>
<dbReference type="PDBsum" id="7NU1"/>
<dbReference type="PDBsum" id="7NU2"/>
<dbReference type="PDBsum" id="7NU3"/>
<dbReference type="PDBsum" id="7NU4"/>
<dbReference type="PDBsum" id="7NU5"/>
<dbReference type="PDBsum" id="7NU6"/>
<dbReference type="PDBsum" id="7NU7"/>
<dbReference type="PDBsum" id="7NU8"/>
<dbReference type="PDBsum" id="7NU9"/>
<dbReference type="PDBsum" id="7NUA"/>
<dbReference type="PDBsum" id="7NUB"/>
<dbReference type="PDBsum" id="7NUC"/>
<dbReference type="PDBsum" id="7YP8"/>
<dbReference type="SMR" id="B4RNT1"/>
<dbReference type="GeneID" id="66752271"/>
<dbReference type="KEGG" id="ngk:NGK_0009"/>
<dbReference type="HOGENOM" id="CLU_004427_0_0_4"/>
<dbReference type="Proteomes" id="UP000002564">
    <property type="component" value="Chromosome"/>
</dbReference>
<dbReference type="GO" id="GO:0005829">
    <property type="term" value="C:cytosol"/>
    <property type="evidence" value="ECO:0007669"/>
    <property type="project" value="TreeGrafter"/>
</dbReference>
<dbReference type="GO" id="GO:0002161">
    <property type="term" value="F:aminoacyl-tRNA deacylase activity"/>
    <property type="evidence" value="ECO:0007669"/>
    <property type="project" value="InterPro"/>
</dbReference>
<dbReference type="GO" id="GO:0005524">
    <property type="term" value="F:ATP binding"/>
    <property type="evidence" value="ECO:0007669"/>
    <property type="project" value="UniProtKB-UniRule"/>
</dbReference>
<dbReference type="GO" id="GO:0004823">
    <property type="term" value="F:leucine-tRNA ligase activity"/>
    <property type="evidence" value="ECO:0007669"/>
    <property type="project" value="UniProtKB-UniRule"/>
</dbReference>
<dbReference type="GO" id="GO:0006429">
    <property type="term" value="P:leucyl-tRNA aminoacylation"/>
    <property type="evidence" value="ECO:0007669"/>
    <property type="project" value="UniProtKB-UniRule"/>
</dbReference>
<dbReference type="CDD" id="cd07958">
    <property type="entry name" value="Anticodon_Ia_Leu_BEm"/>
    <property type="match status" value="1"/>
</dbReference>
<dbReference type="CDD" id="cd00812">
    <property type="entry name" value="LeuRS_core"/>
    <property type="match status" value="1"/>
</dbReference>
<dbReference type="FunFam" id="1.10.730.10:FF:000003">
    <property type="entry name" value="Leucine--tRNA ligase"/>
    <property type="match status" value="1"/>
</dbReference>
<dbReference type="FunFam" id="2.20.28.290:FF:000001">
    <property type="entry name" value="Leucine--tRNA ligase"/>
    <property type="match status" value="1"/>
</dbReference>
<dbReference type="FunFam" id="3.10.20.590:FF:000001">
    <property type="entry name" value="Leucine--tRNA ligase"/>
    <property type="match status" value="1"/>
</dbReference>
<dbReference type="FunFam" id="3.40.50.620:FF:000003">
    <property type="entry name" value="Leucine--tRNA ligase"/>
    <property type="match status" value="1"/>
</dbReference>
<dbReference type="FunFam" id="3.40.50.620:FF:000124">
    <property type="entry name" value="Leucine--tRNA ligase"/>
    <property type="match status" value="1"/>
</dbReference>
<dbReference type="FunFam" id="3.90.740.10:FF:000012">
    <property type="entry name" value="Leucine--tRNA ligase"/>
    <property type="match status" value="1"/>
</dbReference>
<dbReference type="Gene3D" id="2.20.28.290">
    <property type="match status" value="1"/>
</dbReference>
<dbReference type="Gene3D" id="3.10.20.590">
    <property type="match status" value="1"/>
</dbReference>
<dbReference type="Gene3D" id="3.40.50.620">
    <property type="entry name" value="HUPs"/>
    <property type="match status" value="2"/>
</dbReference>
<dbReference type="Gene3D" id="1.10.730.10">
    <property type="entry name" value="Isoleucyl-tRNA Synthetase, Domain 1"/>
    <property type="match status" value="1"/>
</dbReference>
<dbReference type="Gene3D" id="3.90.740.10">
    <property type="entry name" value="Valyl/Leucyl/Isoleucyl-tRNA synthetase, editing domain"/>
    <property type="match status" value="1"/>
</dbReference>
<dbReference type="HAMAP" id="MF_00049_B">
    <property type="entry name" value="Leu_tRNA_synth_B"/>
    <property type="match status" value="1"/>
</dbReference>
<dbReference type="InterPro" id="IPR001412">
    <property type="entry name" value="aa-tRNA-synth_I_CS"/>
</dbReference>
<dbReference type="InterPro" id="IPR002300">
    <property type="entry name" value="aa-tRNA-synth_Ia"/>
</dbReference>
<dbReference type="InterPro" id="IPR002302">
    <property type="entry name" value="Leu-tRNA-ligase"/>
</dbReference>
<dbReference type="InterPro" id="IPR025709">
    <property type="entry name" value="Leu_tRNA-synth_edit"/>
</dbReference>
<dbReference type="InterPro" id="IPR013155">
    <property type="entry name" value="M/V/L/I-tRNA-synth_anticd-bd"/>
</dbReference>
<dbReference type="InterPro" id="IPR015413">
    <property type="entry name" value="Methionyl/Leucyl_tRNA_Synth"/>
</dbReference>
<dbReference type="InterPro" id="IPR014729">
    <property type="entry name" value="Rossmann-like_a/b/a_fold"/>
</dbReference>
<dbReference type="InterPro" id="IPR009080">
    <property type="entry name" value="tRNAsynth_Ia_anticodon-bd"/>
</dbReference>
<dbReference type="InterPro" id="IPR009008">
    <property type="entry name" value="Val/Leu/Ile-tRNA-synth_edit"/>
</dbReference>
<dbReference type="NCBIfam" id="TIGR00396">
    <property type="entry name" value="leuS_bact"/>
    <property type="match status" value="1"/>
</dbReference>
<dbReference type="PANTHER" id="PTHR43740:SF2">
    <property type="entry name" value="LEUCINE--TRNA LIGASE, MITOCHONDRIAL"/>
    <property type="match status" value="1"/>
</dbReference>
<dbReference type="PANTHER" id="PTHR43740">
    <property type="entry name" value="LEUCYL-TRNA SYNTHETASE"/>
    <property type="match status" value="1"/>
</dbReference>
<dbReference type="Pfam" id="PF08264">
    <property type="entry name" value="Anticodon_1"/>
    <property type="match status" value="1"/>
</dbReference>
<dbReference type="Pfam" id="PF00133">
    <property type="entry name" value="tRNA-synt_1"/>
    <property type="match status" value="2"/>
</dbReference>
<dbReference type="Pfam" id="PF13603">
    <property type="entry name" value="tRNA-synt_1_2"/>
    <property type="match status" value="1"/>
</dbReference>
<dbReference type="Pfam" id="PF09334">
    <property type="entry name" value="tRNA-synt_1g"/>
    <property type="match status" value="1"/>
</dbReference>
<dbReference type="PRINTS" id="PR00985">
    <property type="entry name" value="TRNASYNTHLEU"/>
</dbReference>
<dbReference type="SUPFAM" id="SSF47323">
    <property type="entry name" value="Anticodon-binding domain of a subclass of class I aminoacyl-tRNA synthetases"/>
    <property type="match status" value="1"/>
</dbReference>
<dbReference type="SUPFAM" id="SSF52374">
    <property type="entry name" value="Nucleotidylyl transferase"/>
    <property type="match status" value="1"/>
</dbReference>
<dbReference type="SUPFAM" id="SSF50677">
    <property type="entry name" value="ValRS/IleRS/LeuRS editing domain"/>
    <property type="match status" value="1"/>
</dbReference>
<dbReference type="PROSITE" id="PS00178">
    <property type="entry name" value="AA_TRNA_LIGASE_I"/>
    <property type="match status" value="1"/>
</dbReference>
<accession>B4RNT1</accession>
<keyword id="KW-0002">3D-structure</keyword>
<keyword id="KW-0030">Aminoacyl-tRNA synthetase</keyword>
<keyword id="KW-0067">ATP-binding</keyword>
<keyword id="KW-0963">Cytoplasm</keyword>
<keyword id="KW-0436">Ligase</keyword>
<keyword id="KW-0547">Nucleotide-binding</keyword>
<keyword id="KW-0648">Protein biosynthesis</keyword>
<feature type="chain" id="PRO_1000091338" description="Leucine--tRNA ligase">
    <location>
        <begin position="1"/>
        <end position="876"/>
    </location>
</feature>
<feature type="short sequence motif" description="'HIGH' region">
    <location>
        <begin position="42"/>
        <end position="52"/>
    </location>
</feature>
<feature type="short sequence motif" description="'KMSKS' region">
    <location>
        <begin position="634"/>
        <end position="638"/>
    </location>
</feature>
<feature type="binding site" evidence="1">
    <location>
        <position position="637"/>
    </location>
    <ligand>
        <name>ATP</name>
        <dbReference type="ChEBI" id="CHEBI:30616"/>
    </ligand>
</feature>
<feature type="helix" evidence="5">
    <location>
        <begin position="7"/>
        <end position="21"/>
    </location>
</feature>
<feature type="turn" evidence="5">
    <location>
        <begin position="22"/>
        <end position="24"/>
    </location>
</feature>
<feature type="strand" evidence="8">
    <location>
        <begin position="30"/>
        <end position="32"/>
    </location>
</feature>
<feature type="strand" evidence="5">
    <location>
        <begin position="34"/>
        <end position="39"/>
    </location>
</feature>
<feature type="strand" evidence="5">
    <location>
        <begin position="44"/>
        <end position="46"/>
    </location>
</feature>
<feature type="helix" evidence="5">
    <location>
        <begin position="50"/>
        <end position="68"/>
    </location>
</feature>
<feature type="strand" evidence="5">
    <location>
        <begin position="72"/>
        <end position="74"/>
    </location>
</feature>
<feature type="strand" evidence="3">
    <location>
        <begin position="76"/>
        <end position="79"/>
    </location>
</feature>
<feature type="helix" evidence="5">
    <location>
        <begin position="84"/>
        <end position="92"/>
    </location>
</feature>
<feature type="helix" evidence="5">
    <location>
        <begin position="97"/>
        <end position="114"/>
    </location>
</feature>
<feature type="helix" evidence="5">
    <location>
        <begin position="121"/>
        <end position="123"/>
    </location>
</feature>
<feature type="helix" evidence="5">
    <location>
        <begin position="130"/>
        <end position="145"/>
    </location>
</feature>
<feature type="strand" evidence="5">
    <location>
        <begin position="148"/>
        <end position="152"/>
    </location>
</feature>
<feature type="strand" evidence="5">
    <location>
        <begin position="155"/>
        <end position="159"/>
    </location>
</feature>
<feature type="turn" evidence="5">
    <location>
        <begin position="160"/>
        <end position="163"/>
    </location>
</feature>
<feature type="strand" evidence="5">
    <location>
        <begin position="164"/>
        <end position="166"/>
    </location>
</feature>
<feature type="helix" evidence="5">
    <location>
        <begin position="168"/>
        <end position="170"/>
    </location>
</feature>
<feature type="turn" evidence="5">
    <location>
        <begin position="177"/>
        <end position="179"/>
    </location>
</feature>
<feature type="strand" evidence="5">
    <location>
        <begin position="184"/>
        <end position="187"/>
    </location>
</feature>
<feature type="strand" evidence="5">
    <location>
        <begin position="190"/>
        <end position="193"/>
    </location>
</feature>
<feature type="helix" evidence="5">
    <location>
        <begin position="195"/>
        <end position="198"/>
    </location>
</feature>
<feature type="helix" evidence="5">
    <location>
        <begin position="199"/>
        <end position="204"/>
    </location>
</feature>
<feature type="helix" evidence="5">
    <location>
        <begin position="205"/>
        <end position="208"/>
    </location>
</feature>
<feature type="helix" evidence="5">
    <location>
        <begin position="214"/>
        <end position="224"/>
    </location>
</feature>
<feature type="strand" evidence="5">
    <location>
        <begin position="226"/>
        <end position="236"/>
    </location>
</feature>
<feature type="helix" evidence="4">
    <location>
        <begin position="238"/>
        <end position="240"/>
    </location>
</feature>
<feature type="helix" evidence="5">
    <location>
        <begin position="247"/>
        <end position="250"/>
    </location>
</feature>
<feature type="strand" evidence="5">
    <location>
        <begin position="251"/>
        <end position="257"/>
    </location>
</feature>
<feature type="helix" evidence="5">
    <location>
        <begin position="259"/>
        <end position="264"/>
    </location>
</feature>
<feature type="strand" evidence="5">
    <location>
        <begin position="267"/>
        <end position="270"/>
    </location>
</feature>
<feature type="strand" evidence="8">
    <location>
        <begin position="272"/>
        <end position="274"/>
    </location>
</feature>
<feature type="helix" evidence="5">
    <location>
        <begin position="275"/>
        <end position="281"/>
    </location>
</feature>
<feature type="helix" evidence="5">
    <location>
        <begin position="285"/>
        <end position="294"/>
    </location>
</feature>
<feature type="helix" evidence="6">
    <location>
        <begin position="301"/>
        <end position="305"/>
    </location>
</feature>
<feature type="strand" evidence="5">
    <location>
        <begin position="311"/>
        <end position="319"/>
    </location>
</feature>
<feature type="turn" evidence="5">
    <location>
        <begin position="321"/>
        <end position="323"/>
    </location>
</feature>
<feature type="strand" evidence="5">
    <location>
        <begin position="326"/>
        <end position="332"/>
    </location>
</feature>
<feature type="strand" evidence="5">
    <location>
        <begin position="339"/>
        <end position="346"/>
    </location>
</feature>
<feature type="turn" evidence="5">
    <location>
        <begin position="348"/>
        <end position="350"/>
    </location>
</feature>
<feature type="helix" evidence="5">
    <location>
        <begin position="352"/>
        <end position="360"/>
    </location>
</feature>
<feature type="strand" evidence="9">
    <location>
        <begin position="369"/>
        <end position="371"/>
    </location>
</feature>
<feature type="strand" evidence="2">
    <location>
        <begin position="378"/>
        <end position="380"/>
    </location>
</feature>
<feature type="helix" evidence="5">
    <location>
        <begin position="383"/>
        <end position="386"/>
    </location>
</feature>
<feature type="strand" evidence="5">
    <location>
        <begin position="388"/>
        <end position="390"/>
    </location>
</feature>
<feature type="helix" evidence="5">
    <location>
        <begin position="397"/>
        <end position="399"/>
    </location>
</feature>
<feature type="helix" evidence="5">
    <location>
        <begin position="404"/>
        <end position="417"/>
    </location>
</feature>
<feature type="strand" evidence="5">
    <location>
        <begin position="420"/>
        <end position="428"/>
    </location>
</feature>
<feature type="strand" evidence="5">
    <location>
        <begin position="435"/>
        <end position="437"/>
    </location>
</feature>
<feature type="strand" evidence="5">
    <location>
        <begin position="439"/>
        <end position="441"/>
    </location>
</feature>
<feature type="strand" evidence="5">
    <location>
        <begin position="446"/>
        <end position="449"/>
    </location>
</feature>
<feature type="turn" evidence="5">
    <location>
        <begin position="450"/>
        <end position="452"/>
    </location>
</feature>
<feature type="strand" evidence="5">
    <location>
        <begin position="453"/>
        <end position="456"/>
    </location>
</feature>
<feature type="helix" evidence="5">
    <location>
        <begin position="459"/>
        <end position="461"/>
    </location>
</feature>
<feature type="strand" evidence="5">
    <location>
        <begin position="474"/>
        <end position="476"/>
    </location>
</feature>
<feature type="helix" evidence="5">
    <location>
        <begin position="479"/>
        <end position="481"/>
    </location>
</feature>
<feature type="helix" evidence="5">
    <location>
        <begin position="483"/>
        <end position="486"/>
    </location>
</feature>
<feature type="strand" evidence="5">
    <location>
        <begin position="487"/>
        <end position="489"/>
    </location>
</feature>
<feature type="turn" evidence="5">
    <location>
        <begin position="491"/>
        <end position="493"/>
    </location>
</feature>
<feature type="strand" evidence="5">
    <location>
        <begin position="496"/>
        <end position="499"/>
    </location>
</feature>
<feature type="helix" evidence="5">
    <location>
        <begin position="507"/>
        <end position="510"/>
    </location>
</feature>
<feature type="helix" evidence="5">
    <location>
        <begin position="513"/>
        <end position="516"/>
    </location>
</feature>
<feature type="strand" evidence="5">
    <location>
        <begin position="523"/>
        <end position="527"/>
    </location>
</feature>
<feature type="helix" evidence="5">
    <location>
        <begin position="529"/>
        <end position="535"/>
    </location>
</feature>
<feature type="strand" evidence="5">
    <location>
        <begin position="537"/>
        <end position="542"/>
    </location>
</feature>
<feature type="helix" evidence="5">
    <location>
        <begin position="545"/>
        <end position="547"/>
    </location>
</feature>
<feature type="turn" evidence="5">
    <location>
        <begin position="548"/>
        <end position="550"/>
    </location>
</feature>
<feature type="helix" evidence="5">
    <location>
        <begin position="551"/>
        <end position="564"/>
    </location>
</feature>
<feature type="strand" evidence="5">
    <location>
        <begin position="573"/>
        <end position="578"/>
    </location>
</feature>
<feature type="strand" evidence="5">
    <location>
        <begin position="583"/>
        <end position="585"/>
    </location>
</feature>
<feature type="strand" evidence="5">
    <location>
        <begin position="588"/>
        <end position="591"/>
    </location>
</feature>
<feature type="strand" evidence="5">
    <location>
        <begin position="595"/>
        <end position="600"/>
    </location>
</feature>
<feature type="helix" evidence="5">
    <location>
        <begin position="602"/>
        <end position="604"/>
    </location>
</feature>
<feature type="strand" evidence="5">
    <location>
        <begin position="605"/>
        <end position="608"/>
    </location>
</feature>
<feature type="strand" evidence="5">
    <location>
        <begin position="611"/>
        <end position="613"/>
    </location>
</feature>
<feature type="strand" evidence="5">
    <location>
        <begin position="617"/>
        <end position="620"/>
    </location>
</feature>
<feature type="turn" evidence="5">
    <location>
        <begin position="621"/>
        <end position="623"/>
    </location>
</feature>
<feature type="strand" evidence="5">
    <location>
        <begin position="632"/>
        <end position="634"/>
    </location>
</feature>
<feature type="helix" evidence="5">
    <location>
        <begin position="637"/>
        <end position="639"/>
    </location>
</feature>
<feature type="helix" evidence="5">
    <location>
        <begin position="645"/>
        <end position="652"/>
    </location>
</feature>
<feature type="helix" evidence="5">
    <location>
        <begin position="654"/>
        <end position="663"/>
    </location>
</feature>
<feature type="strand" evidence="7">
    <location>
        <begin position="667"/>
        <end position="669"/>
    </location>
</feature>
<feature type="helix" evidence="5">
    <location>
        <begin position="675"/>
        <end position="697"/>
    </location>
</feature>
<feature type="helix" evidence="5">
    <location>
        <begin position="714"/>
        <end position="735"/>
    </location>
</feature>
<feature type="helix" evidence="5">
    <location>
        <begin position="741"/>
        <end position="755"/>
    </location>
</feature>
<feature type="helix" evidence="5">
    <location>
        <begin position="762"/>
        <end position="779"/>
    </location>
</feature>
<feature type="turn" evidence="5">
    <location>
        <begin position="780"/>
        <end position="782"/>
    </location>
</feature>
<feature type="helix" evidence="5">
    <location>
        <begin position="784"/>
        <end position="794"/>
    </location>
</feature>
<feature type="helix" evidence="5">
    <location>
        <begin position="799"/>
        <end position="802"/>
    </location>
</feature>
<feature type="helix" evidence="5">
    <location>
        <begin position="809"/>
        <end position="812"/>
    </location>
</feature>
<feature type="strand" evidence="5">
    <location>
        <begin position="816"/>
        <end position="823"/>
    </location>
</feature>
<feature type="strand" evidence="5">
    <location>
        <begin position="826"/>
        <end position="834"/>
    </location>
</feature>
<feature type="helix" evidence="5">
    <location>
        <begin position="839"/>
        <end position="846"/>
    </location>
</feature>
<feature type="helix" evidence="5">
    <location>
        <begin position="850"/>
        <end position="856"/>
    </location>
</feature>
<feature type="strand" evidence="5">
    <location>
        <begin position="862"/>
        <end position="867"/>
    </location>
</feature>
<feature type="turn" evidence="5">
    <location>
        <begin position="868"/>
        <end position="870"/>
    </location>
</feature>
<feature type="strand" evidence="5">
    <location>
        <begin position="871"/>
        <end position="875"/>
    </location>
</feature>
<gene>
    <name evidence="1" type="primary">leuS</name>
    <name type="ordered locus">NGK_0009</name>
</gene>
<reference key="1">
    <citation type="journal article" date="2008" name="J. Bacteriol.">
        <title>Complete genome sequence of Neisseria gonorrhoeae NCCP11945.</title>
        <authorList>
            <person name="Chung G.T."/>
            <person name="Yoo J.S."/>
            <person name="Oh H.B."/>
            <person name="Lee Y.S."/>
            <person name="Cha S.H."/>
            <person name="Kim S.J."/>
            <person name="Yoo C.K."/>
        </authorList>
    </citation>
    <scope>NUCLEOTIDE SEQUENCE [LARGE SCALE GENOMIC DNA]</scope>
    <source>
        <strain>NCCP11945</strain>
    </source>
</reference>
<organism>
    <name type="scientific">Neisseria gonorrhoeae (strain NCCP11945)</name>
    <dbReference type="NCBI Taxonomy" id="521006"/>
    <lineage>
        <taxon>Bacteria</taxon>
        <taxon>Pseudomonadati</taxon>
        <taxon>Pseudomonadota</taxon>
        <taxon>Betaproteobacteria</taxon>
        <taxon>Neisseriales</taxon>
        <taxon>Neisseriaceae</taxon>
        <taxon>Neisseria</taxon>
    </lineage>
</organism>
<proteinExistence type="evidence at protein level"/>